<accession>Q7G192</accession>
<accession>O49156</accession>
<accession>O64418</accession>
<dbReference type="EC" id="1.2.3.7"/>
<dbReference type="EMBL" id="AB005805">
    <property type="protein sequence ID" value="BAA28625.1"/>
    <property type="molecule type" value="mRNA"/>
</dbReference>
<dbReference type="EMBL" id="AL391734">
    <property type="protein sequence ID" value="CAC05634.1"/>
    <property type="molecule type" value="Genomic_DNA"/>
</dbReference>
<dbReference type="EMBL" id="CP002686">
    <property type="protein sequence ID" value="AEE77812.1"/>
    <property type="molecule type" value="Genomic_DNA"/>
</dbReference>
<dbReference type="EMBL" id="AF039896">
    <property type="protein sequence ID" value="AAC39510.1"/>
    <property type="molecule type" value="mRNA"/>
</dbReference>
<dbReference type="PIR" id="T51623">
    <property type="entry name" value="T51623"/>
</dbReference>
<dbReference type="PIR" id="T52050">
    <property type="entry name" value="T52050"/>
</dbReference>
<dbReference type="RefSeq" id="NP_189946.1">
    <property type="nucleotide sequence ID" value="NM_114228.3"/>
</dbReference>
<dbReference type="SMR" id="Q7G192"/>
<dbReference type="FunCoup" id="Q7G192">
    <property type="interactions" value="11"/>
</dbReference>
<dbReference type="IntAct" id="Q7G192">
    <property type="interactions" value="2"/>
</dbReference>
<dbReference type="STRING" id="3702.Q7G192"/>
<dbReference type="iPTMnet" id="Q7G192"/>
<dbReference type="PaxDb" id="3702-AT3G43600.1"/>
<dbReference type="ProteomicsDB" id="244827"/>
<dbReference type="EnsemblPlants" id="AT3G43600.1">
    <property type="protein sequence ID" value="AT3G43600.1"/>
    <property type="gene ID" value="AT3G43600"/>
</dbReference>
<dbReference type="GeneID" id="823457"/>
<dbReference type="Gramene" id="AT3G43600.1">
    <property type="protein sequence ID" value="AT3G43600.1"/>
    <property type="gene ID" value="AT3G43600"/>
</dbReference>
<dbReference type="KEGG" id="ath:AT3G43600"/>
<dbReference type="Araport" id="AT3G43600"/>
<dbReference type="TAIR" id="AT3G43600">
    <property type="gene designation" value="AAO2"/>
</dbReference>
<dbReference type="eggNOG" id="KOG0430">
    <property type="taxonomic scope" value="Eukaryota"/>
</dbReference>
<dbReference type="HOGENOM" id="CLU_001681_1_1_1"/>
<dbReference type="InParanoid" id="Q7G192"/>
<dbReference type="OMA" id="VQNARIC"/>
<dbReference type="PhylomeDB" id="Q7G192"/>
<dbReference type="BioCyc" id="ARA:AT3G43600-MONOMER"/>
<dbReference type="BioCyc" id="MetaCyc:AT3G43600-MONOMER"/>
<dbReference type="BRENDA" id="1.2.3.1">
    <property type="organism ID" value="399"/>
</dbReference>
<dbReference type="SABIO-RK" id="Q7G192"/>
<dbReference type="PRO" id="PR:Q7G192"/>
<dbReference type="Proteomes" id="UP000006548">
    <property type="component" value="Chromosome 3"/>
</dbReference>
<dbReference type="ExpressionAtlas" id="Q7G192">
    <property type="expression patterns" value="baseline and differential"/>
</dbReference>
<dbReference type="GO" id="GO:0005737">
    <property type="term" value="C:cytoplasm"/>
    <property type="evidence" value="ECO:0007669"/>
    <property type="project" value="UniProtKB-SubCell"/>
</dbReference>
<dbReference type="GO" id="GO:0051537">
    <property type="term" value="F:2 iron, 2 sulfur cluster binding"/>
    <property type="evidence" value="ECO:0007669"/>
    <property type="project" value="UniProtKB-KW"/>
</dbReference>
<dbReference type="GO" id="GO:0004031">
    <property type="term" value="F:aldehyde oxidase activity"/>
    <property type="evidence" value="ECO:0000314"/>
    <property type="project" value="TAIR"/>
</dbReference>
<dbReference type="GO" id="GO:0071949">
    <property type="term" value="F:FAD binding"/>
    <property type="evidence" value="ECO:0007669"/>
    <property type="project" value="InterPro"/>
</dbReference>
<dbReference type="GO" id="GO:0050302">
    <property type="term" value="F:indole-3-acetaldehyde oxidase activity"/>
    <property type="evidence" value="ECO:0007669"/>
    <property type="project" value="UniProtKB-EC"/>
</dbReference>
<dbReference type="GO" id="GO:0005506">
    <property type="term" value="F:iron ion binding"/>
    <property type="evidence" value="ECO:0007669"/>
    <property type="project" value="InterPro"/>
</dbReference>
<dbReference type="GO" id="GO:0009688">
    <property type="term" value="P:abscisic acid biosynthetic process"/>
    <property type="evidence" value="ECO:0007669"/>
    <property type="project" value="UniProtKB-KW"/>
</dbReference>
<dbReference type="GO" id="GO:0009851">
    <property type="term" value="P:auxin biosynthetic process"/>
    <property type="evidence" value="ECO:0007669"/>
    <property type="project" value="UniProtKB-KW"/>
</dbReference>
<dbReference type="CDD" id="cd00207">
    <property type="entry name" value="fer2"/>
    <property type="match status" value="1"/>
</dbReference>
<dbReference type="FunFam" id="1.10.150.120:FF:000006">
    <property type="entry name" value="Aldehyde oxidase"/>
    <property type="match status" value="1"/>
</dbReference>
<dbReference type="FunFam" id="3.30.365.10:FF:000029">
    <property type="entry name" value="Aldehyde oxidase"/>
    <property type="match status" value="1"/>
</dbReference>
<dbReference type="FunFam" id="3.30.390.50:FF:000003">
    <property type="entry name" value="Aldehyde oxidase1"/>
    <property type="match status" value="1"/>
</dbReference>
<dbReference type="FunFam" id="3.30.43.10:FF:000023">
    <property type="entry name" value="Indole-3-acetaldehyde oxidase"/>
    <property type="match status" value="1"/>
</dbReference>
<dbReference type="FunFam" id="3.30.365.10:FF:000001">
    <property type="entry name" value="Xanthine dehydrogenase oxidase"/>
    <property type="match status" value="1"/>
</dbReference>
<dbReference type="FunFam" id="3.10.20.30:FF:000012">
    <property type="entry name" value="Xanthine dehydrogenase/oxidase"/>
    <property type="match status" value="1"/>
</dbReference>
<dbReference type="Gene3D" id="3.10.20.30">
    <property type="match status" value="1"/>
</dbReference>
<dbReference type="Gene3D" id="3.30.465.10">
    <property type="match status" value="1"/>
</dbReference>
<dbReference type="Gene3D" id="1.10.150.120">
    <property type="entry name" value="[2Fe-2S]-binding domain"/>
    <property type="match status" value="1"/>
</dbReference>
<dbReference type="Gene3D" id="3.90.1170.50">
    <property type="entry name" value="Aldehyde oxidase/xanthine dehydrogenase, a/b hammerhead"/>
    <property type="match status" value="1"/>
</dbReference>
<dbReference type="Gene3D" id="3.30.365.10">
    <property type="entry name" value="Aldehyde oxidase/xanthine dehydrogenase, molybdopterin binding domain"/>
    <property type="match status" value="4"/>
</dbReference>
<dbReference type="Gene3D" id="3.30.390.50">
    <property type="entry name" value="CO dehydrogenase flavoprotein, C-terminal domain"/>
    <property type="match status" value="1"/>
</dbReference>
<dbReference type="Gene3D" id="3.30.43.10">
    <property type="entry name" value="Uridine Diphospho-n-acetylenolpyruvylglucosamine Reductase, domain 2"/>
    <property type="match status" value="1"/>
</dbReference>
<dbReference type="InterPro" id="IPR002888">
    <property type="entry name" value="2Fe-2S-bd"/>
</dbReference>
<dbReference type="InterPro" id="IPR036884">
    <property type="entry name" value="2Fe-2S-bd_dom_sf"/>
</dbReference>
<dbReference type="InterPro" id="IPR036010">
    <property type="entry name" value="2Fe-2S_ferredoxin-like_sf"/>
</dbReference>
<dbReference type="InterPro" id="IPR001041">
    <property type="entry name" value="2Fe-2S_ferredoxin-type"/>
</dbReference>
<dbReference type="InterPro" id="IPR006058">
    <property type="entry name" value="2Fe2S_fd_BS"/>
</dbReference>
<dbReference type="InterPro" id="IPR000674">
    <property type="entry name" value="Ald_Oxase/Xan_DH_a/b"/>
</dbReference>
<dbReference type="InterPro" id="IPR036856">
    <property type="entry name" value="Ald_Oxase/Xan_DH_a/b_sf"/>
</dbReference>
<dbReference type="InterPro" id="IPR016208">
    <property type="entry name" value="Ald_Oxase/xanthine_DH-like"/>
</dbReference>
<dbReference type="InterPro" id="IPR008274">
    <property type="entry name" value="AldOxase/xan_DH_MoCoBD1"/>
</dbReference>
<dbReference type="InterPro" id="IPR046867">
    <property type="entry name" value="AldOxase/xan_DH_MoCoBD2"/>
</dbReference>
<dbReference type="InterPro" id="IPR037165">
    <property type="entry name" value="AldOxase/xan_DH_Mopterin-bd_sf"/>
</dbReference>
<dbReference type="InterPro" id="IPR012675">
    <property type="entry name" value="Beta-grasp_dom_sf"/>
</dbReference>
<dbReference type="InterPro" id="IPR005107">
    <property type="entry name" value="CO_DH_flav_C"/>
</dbReference>
<dbReference type="InterPro" id="IPR036683">
    <property type="entry name" value="CO_DH_flav_C_dom_sf"/>
</dbReference>
<dbReference type="InterPro" id="IPR016166">
    <property type="entry name" value="FAD-bd_PCMH"/>
</dbReference>
<dbReference type="InterPro" id="IPR036318">
    <property type="entry name" value="FAD-bd_PCMH-like_sf"/>
</dbReference>
<dbReference type="InterPro" id="IPR016167">
    <property type="entry name" value="FAD-bd_PCMH_sub1"/>
</dbReference>
<dbReference type="InterPro" id="IPR016169">
    <property type="entry name" value="FAD-bd_PCMH_sub2"/>
</dbReference>
<dbReference type="InterPro" id="IPR002346">
    <property type="entry name" value="Mopterin_DH_FAD-bd"/>
</dbReference>
<dbReference type="PANTHER" id="PTHR11908:SF132">
    <property type="entry name" value="ALDEHYDE OXIDASE 1-RELATED"/>
    <property type="match status" value="1"/>
</dbReference>
<dbReference type="PANTHER" id="PTHR11908">
    <property type="entry name" value="XANTHINE DEHYDROGENASE"/>
    <property type="match status" value="1"/>
</dbReference>
<dbReference type="Pfam" id="PF01315">
    <property type="entry name" value="Ald_Xan_dh_C"/>
    <property type="match status" value="1"/>
</dbReference>
<dbReference type="Pfam" id="PF03450">
    <property type="entry name" value="CO_deh_flav_C"/>
    <property type="match status" value="1"/>
</dbReference>
<dbReference type="Pfam" id="PF00941">
    <property type="entry name" value="FAD_binding_5"/>
    <property type="match status" value="1"/>
</dbReference>
<dbReference type="Pfam" id="PF00111">
    <property type="entry name" value="Fer2"/>
    <property type="match status" value="1"/>
</dbReference>
<dbReference type="Pfam" id="PF01799">
    <property type="entry name" value="Fer2_2"/>
    <property type="match status" value="1"/>
</dbReference>
<dbReference type="Pfam" id="PF02738">
    <property type="entry name" value="MoCoBD_1"/>
    <property type="match status" value="1"/>
</dbReference>
<dbReference type="Pfam" id="PF20256">
    <property type="entry name" value="MoCoBD_2"/>
    <property type="match status" value="1"/>
</dbReference>
<dbReference type="PIRSF" id="PIRSF000127">
    <property type="entry name" value="Xanthine_DH"/>
    <property type="match status" value="1"/>
</dbReference>
<dbReference type="SMART" id="SM01008">
    <property type="entry name" value="Ald_Xan_dh_C"/>
    <property type="match status" value="1"/>
</dbReference>
<dbReference type="SMART" id="SM01092">
    <property type="entry name" value="CO_deh_flav_C"/>
    <property type="match status" value="1"/>
</dbReference>
<dbReference type="SUPFAM" id="SSF54292">
    <property type="entry name" value="2Fe-2S ferredoxin-like"/>
    <property type="match status" value="1"/>
</dbReference>
<dbReference type="SUPFAM" id="SSF55447">
    <property type="entry name" value="CO dehydrogenase flavoprotein C-terminal domain-like"/>
    <property type="match status" value="1"/>
</dbReference>
<dbReference type="SUPFAM" id="SSF47741">
    <property type="entry name" value="CO dehydrogenase ISP C-domain like"/>
    <property type="match status" value="1"/>
</dbReference>
<dbReference type="SUPFAM" id="SSF54665">
    <property type="entry name" value="CO dehydrogenase molybdoprotein N-domain-like"/>
    <property type="match status" value="1"/>
</dbReference>
<dbReference type="SUPFAM" id="SSF56176">
    <property type="entry name" value="FAD-binding/transporter-associated domain-like"/>
    <property type="match status" value="1"/>
</dbReference>
<dbReference type="SUPFAM" id="SSF56003">
    <property type="entry name" value="Molybdenum cofactor-binding domain"/>
    <property type="match status" value="1"/>
</dbReference>
<dbReference type="PROSITE" id="PS00197">
    <property type="entry name" value="2FE2S_FER_1"/>
    <property type="match status" value="1"/>
</dbReference>
<dbReference type="PROSITE" id="PS51085">
    <property type="entry name" value="2FE2S_FER_2"/>
    <property type="match status" value="1"/>
</dbReference>
<dbReference type="PROSITE" id="PS51387">
    <property type="entry name" value="FAD_PCMH"/>
    <property type="match status" value="1"/>
</dbReference>
<name>ALDO2_ARATH</name>
<organism>
    <name type="scientific">Arabidopsis thaliana</name>
    <name type="common">Mouse-ear cress</name>
    <dbReference type="NCBI Taxonomy" id="3702"/>
    <lineage>
        <taxon>Eukaryota</taxon>
        <taxon>Viridiplantae</taxon>
        <taxon>Streptophyta</taxon>
        <taxon>Embryophyta</taxon>
        <taxon>Tracheophyta</taxon>
        <taxon>Spermatophyta</taxon>
        <taxon>Magnoliopsida</taxon>
        <taxon>eudicotyledons</taxon>
        <taxon>Gunneridae</taxon>
        <taxon>Pentapetalae</taxon>
        <taxon>rosids</taxon>
        <taxon>malvids</taxon>
        <taxon>Brassicales</taxon>
        <taxon>Brassicaceae</taxon>
        <taxon>Camelineae</taxon>
        <taxon>Arabidopsis</taxon>
    </lineage>
</organism>
<proteinExistence type="evidence at protein level"/>
<keyword id="KW-0001">2Fe-2S</keyword>
<keyword id="KW-0937">Abscisic acid biosynthesis</keyword>
<keyword id="KW-0073">Auxin biosynthesis</keyword>
<keyword id="KW-0963">Cytoplasm</keyword>
<keyword id="KW-0274">FAD</keyword>
<keyword id="KW-0285">Flavoprotein</keyword>
<keyword id="KW-0408">Iron</keyword>
<keyword id="KW-0411">Iron-sulfur</keyword>
<keyword id="KW-0479">Metal-binding</keyword>
<keyword id="KW-0500">Molybdenum</keyword>
<keyword id="KW-0520">NAD</keyword>
<keyword id="KW-0560">Oxidoreductase</keyword>
<keyword id="KW-1185">Reference proteome</keyword>
<sequence length="1321" mass="144580">MSLVFAINGQRFELELSSVDPSTTLLEFLRYQTSFKSVKLSCGEGGCGACVVLLSKFDPVLQKVEDFTVSSCLTLLCSVNHCNITTSEGLGNSRDGFHPIHKRLSGFHASQCGFCTPGMSVSLFSALLDADKSQYSDLTVVEAEKAVSGNLCRCTGYRPIVDACKSFASDVDIEDLGLNSFCRKGDKDSSSLTRFDSEKRICTFPEFLKDEIKSVDSGMYRWCSPASVEELSSLLEACKANSNTVSMKLVAGNTSMGYYKDEREQNYDKYIDITRIPHLKEIRENQNGVEIGSVVTISKVIAALKEIRVSPGVEKIFGKLATHMEMIAARFIRNFGSIGGNLVMAQRKQFPSDMATILLAAGAFVNIMSSSRGLEKLTLEEFLERSPLEAHDLVLSIEIPFWHSETNSELFFETYRAAPRPHGSALAYLNAAFLAEVKDTMVVNCRLAFGAYGTKHAIRCKEIEEFLSGKVITDKVLYEAITLLGNVVVPEDGTSNPAYRSSLAPGFLFKFLHTLMTHPTTDKPSNGYHLDPPKPLPMLSSSQNVPINNEYNPVGQPVTKVGASLQASGEAVYVDDIPSPTNCLYGAFIYSKKPFARIKGIHFKDDLVPTGVVAVISRKDVPKGGKNIGMKIGLGSDQLFAEDFTTSVGECIAFVVADTQRHADAAVNLAVVEYETEDLEPPILSVEDAVKKSSLFDIIPFLYPQQVGDTSKGMAEADHQILSSEIRLGSQYVFYMETQTALAVGDEDNCIVVYSSTQTPQYVQSSVAACLGIPENNIRVITRRVGGGFGGKSVKSMPVATACALAAKKLQRPVRTYVNRKTDMIMTGGRHPMKITYSVGFKSTGKITALELEILIDAGASYGFSMFIPSNLIGSLKKYNWGALSFDIKLCKTNLLSRAIMRSPGDVQGTYIAEAIIENIASSLSLEVDTIRKINLHTHESLALFYKDGAGEPHEYTLSSMWDKVGVSSKFEERVSVVREFNESNMWRKRGISRVPIIYEVLLFATPGRVSVLSDGTIVVEIGGIELGQGLWTKVKQMTSYALGMLQCDGTEELLEKIRVIQSDSLSMVQGNFTGGSTTSEGSCAAVRLCCETLVERLKPLMERSDGPITWNELISQAYAQSVNLSASDLYTPKDTPMQYLNYGTAVSEVEVDLVTGQTTVLQTDILYDCGKSLNPAVDLGQIEGSFVQGLGFFMLEEYIEDPEGLLLTDSTWTYKIPTVDTIPKQFNVEILNGGCHEKRVLSSKASGEPPLLLAASVHCATRQAVKEARKQLCMWKGENGSSGSAFQLPVPATMPVVKELCGLDIIESYLEWKLHDNSNL</sequence>
<protein>
    <recommendedName>
        <fullName>Indole-3-acetaldehyde oxidase</fullName>
        <shortName>IAA oxidase</shortName>
        <ecNumber>1.2.3.7</ecNumber>
    </recommendedName>
    <alternativeName>
        <fullName>Aldehyde oxidase 2</fullName>
        <shortName>AO-2</shortName>
        <shortName>AtAO-2</shortName>
        <shortName>AtAO3</shortName>
    </alternativeName>
</protein>
<gene>
    <name type="primary">AAO2</name>
    <name type="synonym">AO3</name>
    <name type="ordered locus">At3g43600</name>
    <name type="ORF">F22J12.40</name>
</gene>
<evidence type="ECO:0000250" key="1"/>
<evidence type="ECO:0000255" key="2">
    <source>
        <dbReference type="PROSITE-ProRule" id="PRU00465"/>
    </source>
</evidence>
<evidence type="ECO:0000255" key="3">
    <source>
        <dbReference type="PROSITE-ProRule" id="PRU00718"/>
    </source>
</evidence>
<evidence type="ECO:0000269" key="4">
    <source>
    </source>
</evidence>
<evidence type="ECO:0000269" key="5">
    <source>
    </source>
</evidence>
<evidence type="ECO:0000269" key="6">
    <source>
    </source>
</evidence>
<evidence type="ECO:0000269" key="7">
    <source>
    </source>
</evidence>
<evidence type="ECO:0000269" key="8">
    <source>
    </source>
</evidence>
<evidence type="ECO:0000269" key="9">
    <source>
    </source>
</evidence>
<evidence type="ECO:0000269" key="10">
    <source>
    </source>
</evidence>
<evidence type="ECO:0000269" key="11">
    <source>
    </source>
</evidence>
<evidence type="ECO:0000305" key="12"/>
<comment type="function">
    <text>In higher plant aldehyde oxidases (AO) appear to be homo- and heterodimeric assemblies of AO subunits with probably different physiological functions. In vitro, AO-gamma uses heptaldehyde, benzaldehyde, naphthaldehyde and cinnamaldehyde as substrates; AO-beta uses indole-3-acetaldehyde (IAAld), indole-3-aldehyde (IAld) and naphtaldehyde; the AAO2-AAO3 dimer uses abscisic aldehyde.</text>
</comment>
<comment type="catalytic activity">
    <reaction evidence="4">
        <text>indole-3-acetaldehyde + O2 + H2O = (indol-3-yl)acetate + H2O2 + H(+)</text>
        <dbReference type="Rhea" id="RHEA:16277"/>
        <dbReference type="ChEBI" id="CHEBI:15377"/>
        <dbReference type="ChEBI" id="CHEBI:15378"/>
        <dbReference type="ChEBI" id="CHEBI:15379"/>
        <dbReference type="ChEBI" id="CHEBI:16240"/>
        <dbReference type="ChEBI" id="CHEBI:18086"/>
        <dbReference type="ChEBI" id="CHEBI:30854"/>
        <dbReference type="EC" id="1.2.3.7"/>
    </reaction>
</comment>
<comment type="cofactor">
    <cofactor evidence="1">
        <name>[2Fe-2S] cluster</name>
        <dbReference type="ChEBI" id="CHEBI:190135"/>
    </cofactor>
    <text evidence="1">Binds 2 [2Fe-2S] clusters.</text>
</comment>
<comment type="cofactor">
    <cofactor evidence="1">
        <name>FAD</name>
        <dbReference type="ChEBI" id="CHEBI:57692"/>
    </cofactor>
</comment>
<comment type="cofactor">
    <cofactor evidence="1">
        <name>Mo-molybdopterin</name>
        <dbReference type="ChEBI" id="CHEBI:71302"/>
    </cofactor>
    <text evidence="1">Binds 1 Mo-molybdopterin (Mo-MPT) cofactor per subunit.</text>
</comment>
<comment type="activity regulation">
    <text evidence="5">Strongly inhibited by iodoacetate, potassium cyanide (KCN), 2-mercaptoethanol, dithiothreitol (DTT), p-chloromercuribenzoate, menadione and estradiol. Weakly inhibited by 4'-(9-acridinylamino)methanesulfon-m-anisidine (mAMSA) and tritonX-100. Not affected by allopurinol.</text>
</comment>
<comment type="biophysicochemical properties">
    <kinetics>
        <KM evidence="5">57 uM for heptaldehyde</KM>
        <KM evidence="5">7.7 uM for benzaldehyde</KM>
        <KM evidence="5">0.33 uM for naphthaldehyde</KM>
        <KM evidence="5">410 uM for cinnamaldehyde</KM>
        <Vmax evidence="5">24.0 nmol/min/mg enzyme with heptaldehyde as substrate</Vmax>
        <Vmax evidence="5">8.7 nmol/min/mg enzyme with benzaldehyde as substrate</Vmax>
        <Vmax evidence="5">65.0 nmol/min/mg enzyme with naphthaldehyde as substrate</Vmax>
        <Vmax evidence="5">20.0 nmol/min/mg enzyme with cinnamaldehyde as substrate</Vmax>
        <text>Kinetic values were obtained with the AO-gamma dimer.</text>
    </kinetics>
    <phDependence>
        <text evidence="5">Optimum pH is 8.</text>
    </phDependence>
    <temperatureDependence>
        <text evidence="5">Optimum temperature is 50 degrees Celsius.</text>
    </temperatureDependence>
</comment>
<comment type="subunit">
    <text evidence="4 7">Aldehyde oxidases (AO) are homodimers and heterodimers of AO subunits. AO-beta is a AAO1-AAO2 heterodimer; AO-gamma is a AAO2 homodimer. AAO2 also forms a dimer with AAO3.</text>
</comment>
<comment type="subcellular location">
    <subcellularLocation>
        <location evidence="12">Cytoplasm</location>
    </subcellularLocation>
</comment>
<comment type="tissue specificity">
    <text evidence="6 8 9 10 11">Weakly expressed in roots, leaves and seedlings. In seedlings, mostly expressed in lower part of hypocotyls. Detectable in seeds and mature siliques at low levels.</text>
</comment>
<comment type="similarity">
    <text evidence="12">Belongs to the xanthine dehydrogenase family.</text>
</comment>
<reference key="1">
    <citation type="journal article" date="1998" name="Plant Cell Physiol.">
        <title>Molecular cloning and characterization of aldehyde oxidases in Arabidopsis thaliana.</title>
        <authorList>
            <person name="Sekimoto H."/>
            <person name="Seo M."/>
            <person name="Kawakami N."/>
            <person name="Komano T."/>
            <person name="Desloire S."/>
            <person name="Liotenberg S."/>
            <person name="Marion-Poll A."/>
            <person name="Caboche M."/>
            <person name="Kamiya Y."/>
            <person name="Koshiba T."/>
        </authorList>
    </citation>
    <scope>NUCLEOTIDE SEQUENCE [MRNA]</scope>
    <scope>TISSUE SPECIFICITY</scope>
    <source>
        <strain>cv. Columbia</strain>
        <tissue>Seedling hypocotyl</tissue>
    </source>
</reference>
<reference key="2">
    <citation type="journal article" date="2000" name="Nature">
        <title>Sequence and analysis of chromosome 3 of the plant Arabidopsis thaliana.</title>
        <authorList>
            <person name="Salanoubat M."/>
            <person name="Lemcke K."/>
            <person name="Rieger M."/>
            <person name="Ansorge W."/>
            <person name="Unseld M."/>
            <person name="Fartmann B."/>
            <person name="Valle G."/>
            <person name="Bloecker H."/>
            <person name="Perez-Alonso M."/>
            <person name="Obermaier B."/>
            <person name="Delseny M."/>
            <person name="Boutry M."/>
            <person name="Grivell L.A."/>
            <person name="Mache R."/>
            <person name="Puigdomenech P."/>
            <person name="De Simone V."/>
            <person name="Choisne N."/>
            <person name="Artiguenave F."/>
            <person name="Robert C."/>
            <person name="Brottier P."/>
            <person name="Wincker P."/>
            <person name="Cattolico L."/>
            <person name="Weissenbach J."/>
            <person name="Saurin W."/>
            <person name="Quetier F."/>
            <person name="Schaefer M."/>
            <person name="Mueller-Auer S."/>
            <person name="Gabel C."/>
            <person name="Fuchs M."/>
            <person name="Benes V."/>
            <person name="Wurmbach E."/>
            <person name="Drzonek H."/>
            <person name="Erfle H."/>
            <person name="Jordan N."/>
            <person name="Bangert S."/>
            <person name="Wiedelmann R."/>
            <person name="Kranz H."/>
            <person name="Voss H."/>
            <person name="Holland R."/>
            <person name="Brandt P."/>
            <person name="Nyakatura G."/>
            <person name="Vezzi A."/>
            <person name="D'Angelo M."/>
            <person name="Pallavicini A."/>
            <person name="Toppo S."/>
            <person name="Simionati B."/>
            <person name="Conrad A."/>
            <person name="Hornischer K."/>
            <person name="Kauer G."/>
            <person name="Loehnert T.-H."/>
            <person name="Nordsiek G."/>
            <person name="Reichelt J."/>
            <person name="Scharfe M."/>
            <person name="Schoen O."/>
            <person name="Bargues M."/>
            <person name="Terol J."/>
            <person name="Climent J."/>
            <person name="Navarro P."/>
            <person name="Collado C."/>
            <person name="Perez-Perez A."/>
            <person name="Ottenwaelder B."/>
            <person name="Duchemin D."/>
            <person name="Cooke R."/>
            <person name="Laudie M."/>
            <person name="Berger-Llauro C."/>
            <person name="Purnelle B."/>
            <person name="Masuy D."/>
            <person name="de Haan M."/>
            <person name="Maarse A.C."/>
            <person name="Alcaraz J.-P."/>
            <person name="Cottet A."/>
            <person name="Casacuberta E."/>
            <person name="Monfort A."/>
            <person name="Argiriou A."/>
            <person name="Flores M."/>
            <person name="Liguori R."/>
            <person name="Vitale D."/>
            <person name="Mannhaupt G."/>
            <person name="Haase D."/>
            <person name="Schoof H."/>
            <person name="Rudd S."/>
            <person name="Zaccaria P."/>
            <person name="Mewes H.-W."/>
            <person name="Mayer K.F.X."/>
            <person name="Kaul S."/>
            <person name="Town C.D."/>
            <person name="Koo H.L."/>
            <person name="Tallon L.J."/>
            <person name="Jenkins J."/>
            <person name="Rooney T."/>
            <person name="Rizzo M."/>
            <person name="Walts A."/>
            <person name="Utterback T."/>
            <person name="Fujii C.Y."/>
            <person name="Shea T.P."/>
            <person name="Creasy T.H."/>
            <person name="Haas B."/>
            <person name="Maiti R."/>
            <person name="Wu D."/>
            <person name="Peterson J."/>
            <person name="Van Aken S."/>
            <person name="Pai G."/>
            <person name="Militscher J."/>
            <person name="Sellers P."/>
            <person name="Gill J.E."/>
            <person name="Feldblyum T.V."/>
            <person name="Preuss D."/>
            <person name="Lin X."/>
            <person name="Nierman W.C."/>
            <person name="Salzberg S.L."/>
            <person name="White O."/>
            <person name="Venter J.C."/>
            <person name="Fraser C.M."/>
            <person name="Kaneko T."/>
            <person name="Nakamura Y."/>
            <person name="Sato S."/>
            <person name="Kato T."/>
            <person name="Asamizu E."/>
            <person name="Sasamoto S."/>
            <person name="Kimura T."/>
            <person name="Idesawa K."/>
            <person name="Kawashima K."/>
            <person name="Kishida Y."/>
            <person name="Kiyokawa C."/>
            <person name="Kohara M."/>
            <person name="Matsumoto M."/>
            <person name="Matsuno A."/>
            <person name="Muraki A."/>
            <person name="Nakayama S."/>
            <person name="Nakazaki N."/>
            <person name="Shinpo S."/>
            <person name="Takeuchi C."/>
            <person name="Wada T."/>
            <person name="Watanabe A."/>
            <person name="Yamada M."/>
            <person name="Yasuda M."/>
            <person name="Tabata S."/>
        </authorList>
    </citation>
    <scope>NUCLEOTIDE SEQUENCE [LARGE SCALE GENOMIC DNA]</scope>
    <source>
        <strain>cv. Columbia</strain>
    </source>
</reference>
<reference key="3">
    <citation type="journal article" date="2017" name="Plant J.">
        <title>Araport11: a complete reannotation of the Arabidopsis thaliana reference genome.</title>
        <authorList>
            <person name="Cheng C.Y."/>
            <person name="Krishnakumar V."/>
            <person name="Chan A.P."/>
            <person name="Thibaud-Nissen F."/>
            <person name="Schobel S."/>
            <person name="Town C.D."/>
        </authorList>
    </citation>
    <scope>GENOME REANNOTATION</scope>
    <source>
        <strain>cv. Columbia</strain>
    </source>
</reference>
<reference key="4">
    <citation type="journal article" date="1998" name="Biochim. Biophys. Acta">
        <title>Biochemical and genetic characterization of three molybdenum cofactor hydroxylases in Arabidopsis thaliana.</title>
        <authorList>
            <person name="Hoff T."/>
            <person name="Frandsen G.I."/>
            <person name="Rocher A."/>
            <person name="Mundy J."/>
        </authorList>
    </citation>
    <scope>NUCLEOTIDE SEQUENCE [MRNA] OF 758-1321</scope>
    <scope>TISSUE SPECIFICITY</scope>
    <source>
        <strain>cv. Wassilewskija</strain>
        <tissue>Root</tissue>
    </source>
</reference>
<reference key="5">
    <citation type="journal article" date="1998" name="Plant Physiol.">
        <title>Higher activity of an aldehyde oxidase in the auxin-overproducing superroot1 mutant of Arabidopsis thaliana.</title>
        <authorList>
            <person name="Seo M."/>
            <person name="Akaba S."/>
            <person name="Oritani T."/>
            <person name="Delarue M."/>
            <person name="Bellini C."/>
            <person name="Caboche M."/>
            <person name="Koshiba T."/>
        </authorList>
    </citation>
    <scope>TISSUE SPECIFICITY</scope>
    <scope>SUBSTRATE SPECIFICITY</scope>
</reference>
<reference key="6">
    <citation type="journal article" date="1999" name="J. Biochem.">
        <title>Production of homo- and hetero-dimeric isozymes from two aldehyde oxidase genes of Arabidopsis thaliana.</title>
        <authorList>
            <person name="Akaba S."/>
            <person name="Seo M."/>
            <person name="Dohmae N."/>
            <person name="Takio K."/>
            <person name="Sekimoto H."/>
            <person name="Kamiya Y."/>
            <person name="Furuya N."/>
            <person name="Komano T."/>
            <person name="Koshiba T."/>
        </authorList>
    </citation>
    <scope>SUBUNIT</scope>
    <scope>CATALYTIC ACTIVITY</scope>
    <scope>IDENTIFICATION BY MASS SPECTROMETRY</scope>
</reference>
<reference key="7">
    <citation type="journal article" date="2000" name="J. Biochem.">
        <title>Functional expression of two Arabidopsis aldehyde oxidases in the yeast Pichia pastoris.</title>
        <authorList>
            <person name="Koiwai H."/>
            <person name="Akaba S."/>
            <person name="Seo M."/>
            <person name="Komano T."/>
            <person name="Koshiba T."/>
        </authorList>
    </citation>
    <scope>BIOPHYSICOCHEMICAL PROPERTIES</scope>
    <scope>ACTIVITY REGULATION</scope>
</reference>
<reference key="8">
    <citation type="journal article" date="2000" name="Plant J.">
        <title>Abscisic aldehyde oxidase in leaves of Arabidopsis thaliana.</title>
        <authorList>
            <person name="Seo M."/>
            <person name="Koiwai H."/>
            <person name="Akaba S."/>
            <person name="Komano T."/>
            <person name="Oritani T."/>
            <person name="Kamiya Y."/>
            <person name="Koshiba T."/>
        </authorList>
    </citation>
    <scope>TISSUE SPECIFICITY</scope>
</reference>
<reference key="9">
    <citation type="journal article" date="2004" name="Plant Cell Physiol.">
        <title>Comparative studies on the Arabidopsis aldehyde oxidase (AAO) gene family revealed a major role of AAO3 in ABA biosynthesis in seeds.</title>
        <authorList>
            <person name="Seo M."/>
            <person name="Aoki H."/>
            <person name="Koiwai H."/>
            <person name="Kamiya Y."/>
            <person name="Nambara E."/>
            <person name="Koshiba T."/>
        </authorList>
    </citation>
    <scope>TISSUE SPECIFICITY</scope>
</reference>
<reference key="10">
    <citation type="journal article" date="2004" name="Plant Physiol.">
        <title>Tissue-specific localization of an abscisic acid biosynthetic enzyme, AAO3, in Arabidopsis.</title>
        <authorList>
            <person name="Koiwai H."/>
            <person name="Nakaminami K."/>
            <person name="Seo M."/>
            <person name="Mitsuhashi W."/>
            <person name="Toyomasu T."/>
            <person name="Koshiba T."/>
        </authorList>
    </citation>
    <scope>SUBUNIT</scope>
    <scope>SUBSTRATE SPECIFICITY</scope>
    <source>
        <strain>cv. Columbia</strain>
        <tissue>Seedling hypocotyl</tissue>
    </source>
</reference>
<feature type="chain" id="PRO_0000166110" description="Indole-3-acetaldehyde oxidase">
    <location>
        <begin position="1"/>
        <end position="1321"/>
    </location>
</feature>
<feature type="domain" description="2Fe-2S ferredoxin-type" evidence="2">
    <location>
        <begin position="1"/>
        <end position="90"/>
    </location>
</feature>
<feature type="domain" description="FAD-binding PCMH-type" evidence="3">
    <location>
        <begin position="215"/>
        <end position="404"/>
    </location>
</feature>
<feature type="binding site" evidence="2">
    <location>
        <position position="42"/>
    </location>
    <ligand>
        <name>[2Fe-2S] cluster</name>
        <dbReference type="ChEBI" id="CHEBI:190135"/>
    </ligand>
</feature>
<feature type="binding site" evidence="2">
    <location>
        <position position="47"/>
    </location>
    <ligand>
        <name>[2Fe-2S] cluster</name>
        <dbReference type="ChEBI" id="CHEBI:190135"/>
    </ligand>
</feature>
<feature type="binding site" evidence="2">
    <location>
        <position position="50"/>
    </location>
    <ligand>
        <name>[2Fe-2S] cluster</name>
        <dbReference type="ChEBI" id="CHEBI:190135"/>
    </ligand>
</feature>
<feature type="sequence conflict" description="In Ref. 4; AAC39510." evidence="12" ref="4">
    <original>K</original>
    <variation>N</variation>
    <location>
        <position position="808"/>
    </location>
</feature>
<feature type="sequence conflict" description="In Ref. 4; AAC39510." evidence="12" ref="4">
    <original>S</original>
    <variation>T</variation>
    <location>
        <position position="1083"/>
    </location>
</feature>